<dbReference type="EC" id="3.7.1.22" evidence="1"/>
<dbReference type="EMBL" id="CP000485">
    <property type="protein sequence ID" value="ABK85559.1"/>
    <property type="molecule type" value="Genomic_DNA"/>
</dbReference>
<dbReference type="RefSeq" id="WP_001195348.1">
    <property type="nucleotide sequence ID" value="NC_008600.1"/>
</dbReference>
<dbReference type="SMR" id="A0REB6"/>
<dbReference type="KEGG" id="btl:BALH_2260"/>
<dbReference type="HOGENOM" id="CLU_013748_6_0_9"/>
<dbReference type="UniPathway" id="UPA00076">
    <property type="reaction ID" value="UER00145"/>
</dbReference>
<dbReference type="GO" id="GO:0005948">
    <property type="term" value="C:acetolactate synthase complex"/>
    <property type="evidence" value="ECO:0007669"/>
    <property type="project" value="TreeGrafter"/>
</dbReference>
<dbReference type="GO" id="GO:0102481">
    <property type="term" value="F:3D-(3,5/4)-trihydroxycyclohexane-1,2-dione hydrolase activity"/>
    <property type="evidence" value="ECO:0007669"/>
    <property type="project" value="UniProtKB-EC"/>
</dbReference>
<dbReference type="GO" id="GO:0003984">
    <property type="term" value="F:acetolactate synthase activity"/>
    <property type="evidence" value="ECO:0007669"/>
    <property type="project" value="TreeGrafter"/>
</dbReference>
<dbReference type="GO" id="GO:0050660">
    <property type="term" value="F:flavin adenine dinucleotide binding"/>
    <property type="evidence" value="ECO:0007669"/>
    <property type="project" value="TreeGrafter"/>
</dbReference>
<dbReference type="GO" id="GO:0000287">
    <property type="term" value="F:magnesium ion binding"/>
    <property type="evidence" value="ECO:0007669"/>
    <property type="project" value="UniProtKB-UniRule"/>
</dbReference>
<dbReference type="GO" id="GO:0030976">
    <property type="term" value="F:thiamine pyrophosphate binding"/>
    <property type="evidence" value="ECO:0007669"/>
    <property type="project" value="UniProtKB-UniRule"/>
</dbReference>
<dbReference type="GO" id="GO:0019310">
    <property type="term" value="P:inositol catabolic process"/>
    <property type="evidence" value="ECO:0007669"/>
    <property type="project" value="UniProtKB-UniRule"/>
</dbReference>
<dbReference type="GO" id="GO:0009097">
    <property type="term" value="P:isoleucine biosynthetic process"/>
    <property type="evidence" value="ECO:0007669"/>
    <property type="project" value="TreeGrafter"/>
</dbReference>
<dbReference type="GO" id="GO:0009099">
    <property type="term" value="P:L-valine biosynthetic process"/>
    <property type="evidence" value="ECO:0007669"/>
    <property type="project" value="TreeGrafter"/>
</dbReference>
<dbReference type="CDD" id="cd02003">
    <property type="entry name" value="TPP_IolD"/>
    <property type="match status" value="1"/>
</dbReference>
<dbReference type="CDD" id="cd07035">
    <property type="entry name" value="TPP_PYR_POX_like"/>
    <property type="match status" value="1"/>
</dbReference>
<dbReference type="FunFam" id="3.40.50.1220:FF:000040">
    <property type="entry name" value="3D-(3,5/4)-trihydroxycyclohexane-1,2-dione hydrolase"/>
    <property type="match status" value="1"/>
</dbReference>
<dbReference type="FunFam" id="3.40.50.970:FF:000056">
    <property type="entry name" value="3D-(3,5/4)-trihydroxycyclohexane-1,2-dione hydrolase"/>
    <property type="match status" value="1"/>
</dbReference>
<dbReference type="FunFam" id="3.40.50.970:FF:000072">
    <property type="entry name" value="3D-(3,5/4)-trihydroxycyclohexane-1,2-dione hydrolase"/>
    <property type="match status" value="1"/>
</dbReference>
<dbReference type="Gene3D" id="3.40.50.970">
    <property type="match status" value="2"/>
</dbReference>
<dbReference type="Gene3D" id="3.40.50.1220">
    <property type="entry name" value="TPP-binding domain"/>
    <property type="match status" value="1"/>
</dbReference>
<dbReference type="HAMAP" id="MF_01669">
    <property type="entry name" value="IolD"/>
    <property type="match status" value="1"/>
</dbReference>
<dbReference type="InterPro" id="IPR029035">
    <property type="entry name" value="DHS-like_NAD/FAD-binding_dom"/>
</dbReference>
<dbReference type="InterPro" id="IPR030817">
    <property type="entry name" value="Myo_inos_IolD"/>
</dbReference>
<dbReference type="InterPro" id="IPR023757">
    <property type="entry name" value="THcHDO_hydrolase_firmi"/>
</dbReference>
<dbReference type="InterPro" id="IPR029061">
    <property type="entry name" value="THDP-binding"/>
</dbReference>
<dbReference type="InterPro" id="IPR012000">
    <property type="entry name" value="Thiamin_PyroP_enz_cen_dom"/>
</dbReference>
<dbReference type="InterPro" id="IPR012001">
    <property type="entry name" value="Thiamin_PyroP_enz_TPP-bd_dom"/>
</dbReference>
<dbReference type="InterPro" id="IPR000399">
    <property type="entry name" value="TPP-bd_CS"/>
</dbReference>
<dbReference type="InterPro" id="IPR045229">
    <property type="entry name" value="TPP_enz"/>
</dbReference>
<dbReference type="InterPro" id="IPR011766">
    <property type="entry name" value="TPP_enzyme_TPP-bd"/>
</dbReference>
<dbReference type="NCBIfam" id="TIGR04377">
    <property type="entry name" value="myo_inos_iolD"/>
    <property type="match status" value="1"/>
</dbReference>
<dbReference type="PANTHER" id="PTHR18968:SF9">
    <property type="entry name" value="3D-(3,5_4)-TRIHYDROXYCYCLOHEXANE-1,2-DIONE HYDROLASE"/>
    <property type="match status" value="1"/>
</dbReference>
<dbReference type="PANTHER" id="PTHR18968">
    <property type="entry name" value="THIAMINE PYROPHOSPHATE ENZYMES"/>
    <property type="match status" value="1"/>
</dbReference>
<dbReference type="Pfam" id="PF02775">
    <property type="entry name" value="TPP_enzyme_C"/>
    <property type="match status" value="1"/>
</dbReference>
<dbReference type="Pfam" id="PF00205">
    <property type="entry name" value="TPP_enzyme_M"/>
    <property type="match status" value="1"/>
</dbReference>
<dbReference type="Pfam" id="PF02776">
    <property type="entry name" value="TPP_enzyme_N"/>
    <property type="match status" value="1"/>
</dbReference>
<dbReference type="SUPFAM" id="SSF52467">
    <property type="entry name" value="DHS-like NAD/FAD-binding domain"/>
    <property type="match status" value="1"/>
</dbReference>
<dbReference type="SUPFAM" id="SSF52518">
    <property type="entry name" value="Thiamin diphosphate-binding fold (THDP-binding)"/>
    <property type="match status" value="2"/>
</dbReference>
<dbReference type="PROSITE" id="PS00187">
    <property type="entry name" value="TPP_ENZYMES"/>
    <property type="match status" value="1"/>
</dbReference>
<organism>
    <name type="scientific">Bacillus thuringiensis (strain Al Hakam)</name>
    <dbReference type="NCBI Taxonomy" id="412694"/>
    <lineage>
        <taxon>Bacteria</taxon>
        <taxon>Bacillati</taxon>
        <taxon>Bacillota</taxon>
        <taxon>Bacilli</taxon>
        <taxon>Bacillales</taxon>
        <taxon>Bacillaceae</taxon>
        <taxon>Bacillus</taxon>
        <taxon>Bacillus cereus group</taxon>
    </lineage>
</organism>
<comment type="function">
    <text evidence="1">Involved in the cleavage of the C1-C2 bond of 3D-(3,5/4)-trihydroxycyclohexane-1,2-dione (THcHDO) to yield 5-deoxy-glucuronate (5DG).</text>
</comment>
<comment type="catalytic activity">
    <reaction evidence="1">
        <text>3D-3,5/4-trihydroxycyclohexane-1,2-dione + H2O = 5-deoxy-D-glucuronate + H(+)</text>
        <dbReference type="Rhea" id="RHEA:25836"/>
        <dbReference type="ChEBI" id="CHEBI:15377"/>
        <dbReference type="ChEBI" id="CHEBI:15378"/>
        <dbReference type="ChEBI" id="CHEBI:28446"/>
        <dbReference type="ChEBI" id="CHEBI:58852"/>
        <dbReference type="EC" id="3.7.1.22"/>
    </reaction>
</comment>
<comment type="cofactor">
    <cofactor evidence="1">
        <name>Mg(2+)</name>
        <dbReference type="ChEBI" id="CHEBI:18420"/>
    </cofactor>
    <text evidence="1">Binds 1 Mg(2+) ion per subunit.</text>
</comment>
<comment type="cofactor">
    <cofactor evidence="1">
        <name>thiamine diphosphate</name>
        <dbReference type="ChEBI" id="CHEBI:58937"/>
    </cofactor>
    <text evidence="1">Binds 1 thiamine pyrophosphate per subunit.</text>
</comment>
<comment type="pathway">
    <text evidence="1">Polyol metabolism; myo-inositol degradation into acetyl-CoA; acetyl-CoA from myo-inositol: step 3/7.</text>
</comment>
<comment type="similarity">
    <text evidence="1">Belongs to the TPP enzyme family.</text>
</comment>
<feature type="chain" id="PRO_0000352535" description="3D-(3,5/4)-trihydroxycyclohexane-1,2-dione hydrolase">
    <location>
        <begin position="1"/>
        <end position="644"/>
    </location>
</feature>
<feature type="region of interest" description="Thiamine pyrophosphate binding" evidence="1">
    <location>
        <begin position="442"/>
        <end position="522"/>
    </location>
</feature>
<feature type="binding site" evidence="1">
    <location>
        <position position="65"/>
    </location>
    <ligand>
        <name>thiamine diphosphate</name>
        <dbReference type="ChEBI" id="CHEBI:58937"/>
    </ligand>
</feature>
<feature type="binding site" evidence="1">
    <location>
        <position position="493"/>
    </location>
    <ligand>
        <name>Mg(2+)</name>
        <dbReference type="ChEBI" id="CHEBI:18420"/>
    </ligand>
</feature>
<feature type="binding site" evidence="1">
    <location>
        <position position="520"/>
    </location>
    <ligand>
        <name>Mg(2+)</name>
        <dbReference type="ChEBI" id="CHEBI:18420"/>
    </ligand>
</feature>
<protein>
    <recommendedName>
        <fullName evidence="1">3D-(3,5/4)-trihydroxycyclohexane-1,2-dione hydrolase</fullName>
        <shortName evidence="1">THcHDO hydrolase</shortName>
        <ecNumber evidence="1">3.7.1.22</ecNumber>
    </recommendedName>
</protein>
<keyword id="KW-0378">Hydrolase</keyword>
<keyword id="KW-0460">Magnesium</keyword>
<keyword id="KW-0479">Metal-binding</keyword>
<keyword id="KW-0520">NAD</keyword>
<keyword id="KW-0786">Thiamine pyrophosphate</keyword>
<sequence>MQTVRMTTAQALVKFLNQQYVEFDGKQQKFIKGIFTIFGHGNVVGLGQALEEDAGELEVYQGRNEQGMANAAMAFAKQKHRKQIMACTSSVGPGSANMITSAATASANNIPVLLLPGDVFATRQSDPVLQQIEQTHDLSISTNDAFRAVSKYWDRINRPEQLMTAMIQAMRVLTNPADTGAVTICLPQDVQGEAWDFPDYFFQKRVHRIERRLPTKASLADAVEMIKRKKKPVMICGGGVRYAEAAEELKQFAETFHIPFGETQAGKSAIESSHPYNLGGIGVTGNIAANTIAKEADLVIGIGTRFTDFTTASKQLFQNEEVEFLNINISEFHANKLDALKVIADAKEALLVLIDELQVMDYRSSYTVEIADAKEAWETELSRLHNIRFTGQDFTPEVEGHFDGNLNEYVDALGSQLTQTAVIGQINTLLDEDAIIVGAAGSLPGDLQRMWASRKPNTYHMEYGYSCMGYEVAGALGAKLAEPSKEVYAMVGDGSYQMLHSELVTSLQENKKINVLLFDNSGFGCINNLQMGNGMGSFGTEFRYRNQETRKLDGTIMKIDFAASAAGYGVKTYHVTSLEQLQEALIDAKKQTVSTLIDIKVLPKTMTNGYESWWHVGIAEVSKSQRVQAAYESKVSNLQQARSY</sequence>
<proteinExistence type="inferred from homology"/>
<name>IOLD_BACAH</name>
<reference key="1">
    <citation type="journal article" date="2007" name="J. Bacteriol.">
        <title>The complete genome sequence of Bacillus thuringiensis Al Hakam.</title>
        <authorList>
            <person name="Challacombe J.F."/>
            <person name="Altherr M.R."/>
            <person name="Xie G."/>
            <person name="Bhotika S.S."/>
            <person name="Brown N."/>
            <person name="Bruce D."/>
            <person name="Campbell C.S."/>
            <person name="Campbell M.L."/>
            <person name="Chen J."/>
            <person name="Chertkov O."/>
            <person name="Cleland C."/>
            <person name="Dimitrijevic M."/>
            <person name="Doggett N.A."/>
            <person name="Fawcett J.J."/>
            <person name="Glavina T."/>
            <person name="Goodwin L.A."/>
            <person name="Green L.D."/>
            <person name="Han C.S."/>
            <person name="Hill K.K."/>
            <person name="Hitchcock P."/>
            <person name="Jackson P.J."/>
            <person name="Keim P."/>
            <person name="Kewalramani A.R."/>
            <person name="Longmire J."/>
            <person name="Lucas S."/>
            <person name="Malfatti S."/>
            <person name="Martinez D."/>
            <person name="McMurry K."/>
            <person name="Meincke L.J."/>
            <person name="Misra M."/>
            <person name="Moseman B.L."/>
            <person name="Mundt M."/>
            <person name="Munk A.C."/>
            <person name="Okinaka R.T."/>
            <person name="Parson-Quintana B."/>
            <person name="Reilly L.P."/>
            <person name="Richardson P."/>
            <person name="Robinson D.L."/>
            <person name="Saunders E."/>
            <person name="Tapia R."/>
            <person name="Tesmer J.G."/>
            <person name="Thayer N."/>
            <person name="Thompson L.S."/>
            <person name="Tice H."/>
            <person name="Ticknor L.O."/>
            <person name="Wills P.L."/>
            <person name="Gilna P."/>
            <person name="Brettin T.S."/>
        </authorList>
    </citation>
    <scope>NUCLEOTIDE SEQUENCE [LARGE SCALE GENOMIC DNA]</scope>
    <source>
        <strain>Al Hakam</strain>
    </source>
</reference>
<accession>A0REB6</accession>
<evidence type="ECO:0000255" key="1">
    <source>
        <dbReference type="HAMAP-Rule" id="MF_01669"/>
    </source>
</evidence>
<gene>
    <name evidence="1" type="primary">iolD</name>
    <name type="ordered locus">BALH_2260</name>
</gene>